<evidence type="ECO:0000255" key="1">
    <source>
        <dbReference type="HAMAP-Rule" id="MF_00532"/>
    </source>
</evidence>
<evidence type="ECO:0000256" key="2">
    <source>
        <dbReference type="SAM" id="MobiDB-lite"/>
    </source>
</evidence>
<evidence type="ECO:0000305" key="3"/>
<name>RS9_CLOBA</name>
<keyword id="KW-0687">Ribonucleoprotein</keyword>
<keyword id="KW-0689">Ribosomal protein</keyword>
<protein>
    <recommendedName>
        <fullName evidence="1">Small ribosomal subunit protein uS9</fullName>
    </recommendedName>
    <alternativeName>
        <fullName evidence="3">30S ribosomal protein S9</fullName>
    </alternativeName>
</protein>
<reference key="1">
    <citation type="submission" date="2008-05" db="EMBL/GenBank/DDBJ databases">
        <title>Complete genome sequence of Clostridium botulinum E3 str. Alaska E43.</title>
        <authorList>
            <person name="Brinkac L.M."/>
            <person name="Brown J.L."/>
            <person name="Bruce D."/>
            <person name="Detter C."/>
            <person name="Munk C."/>
            <person name="Smith L.A."/>
            <person name="Smith T.J."/>
            <person name="Sutton G."/>
            <person name="Brettin T.S."/>
        </authorList>
    </citation>
    <scope>NUCLEOTIDE SEQUENCE [LARGE SCALE GENOMIC DNA]</scope>
    <source>
        <strain>Alaska E43 / Type E3</strain>
    </source>
</reference>
<feature type="chain" id="PRO_1000128105" description="Small ribosomal subunit protein uS9">
    <location>
        <begin position="1"/>
        <end position="130"/>
    </location>
</feature>
<feature type="region of interest" description="Disordered" evidence="2">
    <location>
        <begin position="99"/>
        <end position="130"/>
    </location>
</feature>
<feature type="compositionally biased region" description="Basic and acidic residues" evidence="2">
    <location>
        <begin position="99"/>
        <end position="110"/>
    </location>
</feature>
<feature type="compositionally biased region" description="Basic residues" evidence="2">
    <location>
        <begin position="111"/>
        <end position="130"/>
    </location>
</feature>
<accession>B2UYE6</accession>
<comment type="similarity">
    <text evidence="1">Belongs to the universal ribosomal protein uS9 family.</text>
</comment>
<gene>
    <name evidence="1" type="primary">rpsI</name>
    <name type="ordered locus">CLH_0273</name>
</gene>
<dbReference type="EMBL" id="CP001078">
    <property type="protein sequence ID" value="ACD51138.1"/>
    <property type="molecule type" value="Genomic_DNA"/>
</dbReference>
<dbReference type="RefSeq" id="WP_003372828.1">
    <property type="nucleotide sequence ID" value="NC_010723.1"/>
</dbReference>
<dbReference type="SMR" id="B2UYE6"/>
<dbReference type="KEGG" id="cbt:CLH_0273"/>
<dbReference type="HOGENOM" id="CLU_046483_2_1_9"/>
<dbReference type="GO" id="GO:0022627">
    <property type="term" value="C:cytosolic small ribosomal subunit"/>
    <property type="evidence" value="ECO:0007669"/>
    <property type="project" value="TreeGrafter"/>
</dbReference>
<dbReference type="GO" id="GO:0003723">
    <property type="term" value="F:RNA binding"/>
    <property type="evidence" value="ECO:0007669"/>
    <property type="project" value="TreeGrafter"/>
</dbReference>
<dbReference type="GO" id="GO:0003735">
    <property type="term" value="F:structural constituent of ribosome"/>
    <property type="evidence" value="ECO:0007669"/>
    <property type="project" value="InterPro"/>
</dbReference>
<dbReference type="GO" id="GO:0006412">
    <property type="term" value="P:translation"/>
    <property type="evidence" value="ECO:0007669"/>
    <property type="project" value="UniProtKB-UniRule"/>
</dbReference>
<dbReference type="FunFam" id="3.30.230.10:FF:000001">
    <property type="entry name" value="30S ribosomal protein S9"/>
    <property type="match status" value="1"/>
</dbReference>
<dbReference type="Gene3D" id="3.30.230.10">
    <property type="match status" value="1"/>
</dbReference>
<dbReference type="HAMAP" id="MF_00532_B">
    <property type="entry name" value="Ribosomal_uS9_B"/>
    <property type="match status" value="1"/>
</dbReference>
<dbReference type="InterPro" id="IPR020568">
    <property type="entry name" value="Ribosomal_Su5_D2-typ_SF"/>
</dbReference>
<dbReference type="InterPro" id="IPR000754">
    <property type="entry name" value="Ribosomal_uS9"/>
</dbReference>
<dbReference type="InterPro" id="IPR023035">
    <property type="entry name" value="Ribosomal_uS9_bac/plastid"/>
</dbReference>
<dbReference type="InterPro" id="IPR020574">
    <property type="entry name" value="Ribosomal_uS9_CS"/>
</dbReference>
<dbReference type="InterPro" id="IPR014721">
    <property type="entry name" value="Ribsml_uS5_D2-typ_fold_subgr"/>
</dbReference>
<dbReference type="NCBIfam" id="NF001099">
    <property type="entry name" value="PRK00132.1"/>
    <property type="match status" value="1"/>
</dbReference>
<dbReference type="PANTHER" id="PTHR21569">
    <property type="entry name" value="RIBOSOMAL PROTEIN S9"/>
    <property type="match status" value="1"/>
</dbReference>
<dbReference type="PANTHER" id="PTHR21569:SF1">
    <property type="entry name" value="SMALL RIBOSOMAL SUBUNIT PROTEIN US9M"/>
    <property type="match status" value="1"/>
</dbReference>
<dbReference type="Pfam" id="PF00380">
    <property type="entry name" value="Ribosomal_S9"/>
    <property type="match status" value="1"/>
</dbReference>
<dbReference type="SUPFAM" id="SSF54211">
    <property type="entry name" value="Ribosomal protein S5 domain 2-like"/>
    <property type="match status" value="1"/>
</dbReference>
<dbReference type="PROSITE" id="PS00360">
    <property type="entry name" value="RIBOSOMAL_S9"/>
    <property type="match status" value="1"/>
</dbReference>
<sequence length="130" mass="14618">MAKVQYMGTGRRKKSVARVRLVPGNGKVTINKREIETFFGLETLRVIVNQPLVLTGTKDKFDVLVNVHGGGFTGQAGAIRHGITRALVKSDETLRPELKKAGFLTRDPRMKERKKYGLKKARRAPQFSKR</sequence>
<organism>
    <name type="scientific">Clostridium botulinum (strain Alaska E43 / Type E3)</name>
    <dbReference type="NCBI Taxonomy" id="508767"/>
    <lineage>
        <taxon>Bacteria</taxon>
        <taxon>Bacillati</taxon>
        <taxon>Bacillota</taxon>
        <taxon>Clostridia</taxon>
        <taxon>Eubacteriales</taxon>
        <taxon>Clostridiaceae</taxon>
        <taxon>Clostridium</taxon>
    </lineage>
</organism>
<proteinExistence type="inferred from homology"/>